<comment type="function">
    <text>Inhibitor of actin polymerization.</text>
</comment>
<comment type="subcellular location">
    <subcellularLocation>
        <location evidence="2">Cytoplasm</location>
    </subcellularLocation>
    <subcellularLocation>
        <location evidence="2">Nucleus</location>
    </subcellularLocation>
    <text>Translocates to nuclear foci during heat shock.</text>
</comment>
<comment type="disease" evidence="3">
    <disease id="DI-02769">
        <name>Neuronopathy, distal hereditary motor, autosomal dominant 4</name>
        <acronym>HMND4</acronym>
        <description>A form of distal hereditary motor neuronopathy, a heterogeneous group of neuromuscular disorders caused by selective degeneration of motor neurons in the anterior horn of the spinal cord, without sensory deficit in the posterior horn. The overall clinical picture consists of a classical distal muscular atrophy syndrome in the legs without clinical sensory loss. The disease starts with weakness and wasting of distal muscles of the anterior tibial and peroneal compartments of the legs. Later on, weakness and atrophy may expand to the proximal muscles of the lower limbs and/or to the distal upper limbs.</description>
        <dbReference type="MIM" id="613376"/>
    </disease>
    <text>The disease is caused by variants affecting the gene represented in this entry.</text>
</comment>
<comment type="similarity">
    <text evidence="1">Belongs to the small heat shock protein (HSP20) family.</text>
</comment>
<feature type="chain" id="PRO_0000125936" description="Heat shock protein beta-3">
    <location>
        <begin position="1"/>
        <end position="150"/>
    </location>
</feature>
<feature type="domain" description="sHSP" evidence="1">
    <location>
        <begin position="47"/>
        <end position="150"/>
    </location>
</feature>
<feature type="sequence variant" id="VAR_063773" description="In HMND4; dbSNP:rs139382018." evidence="3">
    <original>R</original>
    <variation>S</variation>
    <location>
        <position position="7"/>
    </location>
</feature>
<feature type="sequence variant" id="VAR_061271" description="In dbSNP:rs35258119.">
    <original>G</original>
    <variation>S</variation>
    <location>
        <position position="67"/>
    </location>
</feature>
<name>HSPB3_HUMAN</name>
<sequence>MAKIILRHLIEIPVRYQEEFEARGLEDCRLDHALYALPGPTIVDLRKTRAAQSPPVDSAAETPPREGKSHFQILLDVVQFLPEDIIIQTFEGWLLIKAQHGTRMDEHGFISRSFTRQYKLPDGVEIKDLSAVLCHDGILVVEVKDPVGTK</sequence>
<dbReference type="EMBL" id="U15590">
    <property type="protein sequence ID" value="AAD05360.1"/>
    <property type="molecule type" value="mRNA"/>
</dbReference>
<dbReference type="EMBL" id="Y17782">
    <property type="protein sequence ID" value="CAA76848.1"/>
    <property type="molecule type" value="mRNA"/>
</dbReference>
<dbReference type="CCDS" id="CCDS3961.1"/>
<dbReference type="RefSeq" id="NP_006299.1">
    <property type="nucleotide sequence ID" value="NM_006308.3"/>
</dbReference>
<dbReference type="PDB" id="6F2R">
    <property type="method" value="X-ray"/>
    <property type="resolution" value="3.90 A"/>
    <property type="chains" value="Q/T/V=1-149"/>
</dbReference>
<dbReference type="PDBsum" id="6F2R"/>
<dbReference type="SMR" id="Q12988"/>
<dbReference type="BioGRID" id="114470">
    <property type="interactions" value="19"/>
</dbReference>
<dbReference type="FunCoup" id="Q12988">
    <property type="interactions" value="140"/>
</dbReference>
<dbReference type="IntAct" id="Q12988">
    <property type="interactions" value="19"/>
</dbReference>
<dbReference type="STRING" id="9606.ENSP00000303394"/>
<dbReference type="GlyGen" id="Q12988">
    <property type="glycosylation" value="1 site"/>
</dbReference>
<dbReference type="iPTMnet" id="Q12988"/>
<dbReference type="PhosphoSitePlus" id="Q12988"/>
<dbReference type="BioMuta" id="HSPB3"/>
<dbReference type="DMDM" id="6016270"/>
<dbReference type="MassIVE" id="Q12988"/>
<dbReference type="PaxDb" id="9606-ENSP00000303394"/>
<dbReference type="PeptideAtlas" id="Q12988"/>
<dbReference type="ProteomicsDB" id="59085"/>
<dbReference type="Antibodypedia" id="23356">
    <property type="antibodies" value="50 antibodies from 14 providers"/>
</dbReference>
<dbReference type="DNASU" id="8988"/>
<dbReference type="Ensembl" id="ENST00000302005.3">
    <property type="protein sequence ID" value="ENSP00000303394.1"/>
    <property type="gene ID" value="ENSG00000169271.3"/>
</dbReference>
<dbReference type="GeneID" id="8988"/>
<dbReference type="KEGG" id="hsa:8988"/>
<dbReference type="MANE-Select" id="ENST00000302005.3">
    <property type="protein sequence ID" value="ENSP00000303394.1"/>
    <property type="RefSeq nucleotide sequence ID" value="NM_006308.3"/>
    <property type="RefSeq protein sequence ID" value="NP_006299.1"/>
</dbReference>
<dbReference type="AGR" id="HGNC:5248"/>
<dbReference type="CTD" id="8988"/>
<dbReference type="DisGeNET" id="8988"/>
<dbReference type="GeneCards" id="HSPB3"/>
<dbReference type="GeneReviews" id="HSPB3"/>
<dbReference type="HGNC" id="HGNC:5248">
    <property type="gene designation" value="HSPB3"/>
</dbReference>
<dbReference type="HPA" id="ENSG00000169271">
    <property type="expression patterns" value="Group enriched (heart muscle, skeletal muscle, tongue)"/>
</dbReference>
<dbReference type="MalaCards" id="HSPB3"/>
<dbReference type="MIM" id="604624">
    <property type="type" value="gene"/>
</dbReference>
<dbReference type="MIM" id="613376">
    <property type="type" value="phenotype"/>
</dbReference>
<dbReference type="neXtProt" id="NX_Q12988"/>
<dbReference type="OpenTargets" id="ENSG00000169271"/>
<dbReference type="Orphanet" id="139525">
    <property type="disease" value="Distal hereditary motor neuropathy type 2"/>
</dbReference>
<dbReference type="PharmGKB" id="PA29513"/>
<dbReference type="VEuPathDB" id="HostDB:ENSG00000169271"/>
<dbReference type="eggNOG" id="KOG3591">
    <property type="taxonomic scope" value="Eukaryota"/>
</dbReference>
<dbReference type="GeneTree" id="ENSGT00940000161247"/>
<dbReference type="HOGENOM" id="CLU_151649_0_0_1"/>
<dbReference type="InParanoid" id="Q12988"/>
<dbReference type="OMA" id="HGPRMDE"/>
<dbReference type="OrthoDB" id="1431247at2759"/>
<dbReference type="PAN-GO" id="Q12988">
    <property type="GO annotations" value="2 GO annotations based on evolutionary models"/>
</dbReference>
<dbReference type="PhylomeDB" id="Q12988"/>
<dbReference type="TreeFam" id="TF105049"/>
<dbReference type="PathwayCommons" id="Q12988"/>
<dbReference type="SignaLink" id="Q12988"/>
<dbReference type="BioGRID-ORCS" id="8988">
    <property type="hits" value="11 hits in 1153 CRISPR screens"/>
</dbReference>
<dbReference type="CD-CODE" id="462A97B5">
    <property type="entry name" value="Leucocyte nuclear body"/>
</dbReference>
<dbReference type="GenomeRNAi" id="8988"/>
<dbReference type="Pharos" id="Q12988">
    <property type="development level" value="Tbio"/>
</dbReference>
<dbReference type="PRO" id="PR:Q12988"/>
<dbReference type="Proteomes" id="UP000005640">
    <property type="component" value="Chromosome 5"/>
</dbReference>
<dbReference type="RNAct" id="Q12988">
    <property type="molecule type" value="protein"/>
</dbReference>
<dbReference type="Bgee" id="ENSG00000169271">
    <property type="expression patterns" value="Expressed in heart right ventricle and 126 other cell types or tissues"/>
</dbReference>
<dbReference type="ExpressionAtlas" id="Q12988">
    <property type="expression patterns" value="baseline and differential"/>
</dbReference>
<dbReference type="GO" id="GO:0005737">
    <property type="term" value="C:cytoplasm"/>
    <property type="evidence" value="ECO:0000314"/>
    <property type="project" value="UniProtKB"/>
</dbReference>
<dbReference type="GO" id="GO:0016607">
    <property type="term" value="C:nuclear speck"/>
    <property type="evidence" value="ECO:0000314"/>
    <property type="project" value="HPA"/>
</dbReference>
<dbReference type="GO" id="GO:0005634">
    <property type="term" value="C:nucleus"/>
    <property type="evidence" value="ECO:0000314"/>
    <property type="project" value="UniProtKB"/>
</dbReference>
<dbReference type="GO" id="GO:0006986">
    <property type="term" value="P:response to unfolded protein"/>
    <property type="evidence" value="ECO:0000304"/>
    <property type="project" value="ProtInc"/>
</dbReference>
<dbReference type="CDD" id="cd06477">
    <property type="entry name" value="ACD_HspB3_Like"/>
    <property type="match status" value="1"/>
</dbReference>
<dbReference type="FunFam" id="2.60.40.790:FF:000046">
    <property type="entry name" value="Heat shock protein beta-3"/>
    <property type="match status" value="1"/>
</dbReference>
<dbReference type="Gene3D" id="2.60.40.790">
    <property type="match status" value="1"/>
</dbReference>
<dbReference type="InterPro" id="IPR002068">
    <property type="entry name" value="A-crystallin/Hsp20_dom"/>
</dbReference>
<dbReference type="InterPro" id="IPR001436">
    <property type="entry name" value="Alpha-crystallin/sHSP_animal"/>
</dbReference>
<dbReference type="InterPro" id="IPR008978">
    <property type="entry name" value="HSP20-like_chaperone"/>
</dbReference>
<dbReference type="InterPro" id="IPR033894">
    <property type="entry name" value="HSPB3"/>
</dbReference>
<dbReference type="PANTHER" id="PTHR47097">
    <property type="entry name" value="HEAT SHOCK PROTEIN BETA-3"/>
    <property type="match status" value="1"/>
</dbReference>
<dbReference type="PANTHER" id="PTHR47097:SF1">
    <property type="entry name" value="HEAT SHOCK PROTEIN BETA-3"/>
    <property type="match status" value="1"/>
</dbReference>
<dbReference type="Pfam" id="PF00011">
    <property type="entry name" value="HSP20"/>
    <property type="match status" value="1"/>
</dbReference>
<dbReference type="PRINTS" id="PR00299">
    <property type="entry name" value="ACRYSTALLIN"/>
</dbReference>
<dbReference type="SUPFAM" id="SSF49764">
    <property type="entry name" value="HSP20-like chaperones"/>
    <property type="match status" value="1"/>
</dbReference>
<dbReference type="PROSITE" id="PS01031">
    <property type="entry name" value="SHSP"/>
    <property type="match status" value="1"/>
</dbReference>
<proteinExistence type="evidence at protein level"/>
<organism>
    <name type="scientific">Homo sapiens</name>
    <name type="common">Human</name>
    <dbReference type="NCBI Taxonomy" id="9606"/>
    <lineage>
        <taxon>Eukaryota</taxon>
        <taxon>Metazoa</taxon>
        <taxon>Chordata</taxon>
        <taxon>Craniata</taxon>
        <taxon>Vertebrata</taxon>
        <taxon>Euteleostomi</taxon>
        <taxon>Mammalia</taxon>
        <taxon>Eutheria</taxon>
        <taxon>Euarchontoglires</taxon>
        <taxon>Primates</taxon>
        <taxon>Haplorrhini</taxon>
        <taxon>Catarrhini</taxon>
        <taxon>Hominidae</taxon>
        <taxon>Homo</taxon>
    </lineage>
</organism>
<accession>Q12988</accession>
<gene>
    <name type="primary">HSPB3</name>
    <name type="synonym">HSP27</name>
    <name type="synonym">HSPL27</name>
</gene>
<evidence type="ECO:0000255" key="1">
    <source>
        <dbReference type="PROSITE-ProRule" id="PRU00285"/>
    </source>
</evidence>
<evidence type="ECO:0000269" key="2">
    <source>
    </source>
</evidence>
<evidence type="ECO:0000269" key="3">
    <source>
    </source>
</evidence>
<protein>
    <recommendedName>
        <fullName>Heat shock protein beta-3</fullName>
        <shortName>HspB3</shortName>
    </recommendedName>
    <alternativeName>
        <fullName>Heat shock 17 kDa protein</fullName>
        <shortName>HSP 17</shortName>
    </alternativeName>
    <alternativeName>
        <fullName>Heat shock protein family B member 3</fullName>
    </alternativeName>
    <alternativeName>
        <fullName>Protein 3</fullName>
    </alternativeName>
</protein>
<reference key="1">
    <citation type="journal article" date="1998" name="Biochim. Biophys. Acta">
        <title>HspB3, the most deviating of the six known human small heat shock proteins.</title>
        <authorList>
            <person name="Boelens W.C."/>
            <person name="van Boekel M.A."/>
            <person name="de Jong W.W."/>
        </authorList>
    </citation>
    <scope>NUCLEOTIDE SEQUENCE [MRNA]</scope>
    <source>
        <tissue>Heart</tissue>
    </source>
</reference>
<reference key="2">
    <citation type="journal article" date="1996" name="Biochim. Biophys. Acta">
        <title>Isolation and characterization of a human heart cDNA encoding a new member of the small heat shock protein family -- HSPL27.</title>
        <authorList>
            <person name="Lam W.Y."/>
            <person name="Wing Tsui S.K.W."/>
            <person name="Law P.T.W."/>
            <person name="Luk S.C."/>
            <person name="Fung K.P."/>
            <person name="Lee C.Y."/>
            <person name="Waye M.M.Y."/>
        </authorList>
    </citation>
    <scope>NUCLEOTIDE SEQUENCE [MRNA]</scope>
    <source>
        <tissue>Heart</tissue>
    </source>
</reference>
<reference key="3">
    <citation type="submission" date="1999-01" db="EMBL/GenBank/DDBJ databases">
        <authorList>
            <person name="Waye M.M.Y."/>
        </authorList>
    </citation>
    <scope>SEQUENCE REVISION</scope>
</reference>
<reference key="4">
    <citation type="journal article" date="2009" name="Biochim. Biophys. Acta">
        <title>HSPB7 is a SC35 speckle resident small heat shock protein.</title>
        <authorList>
            <person name="Vos M.J."/>
            <person name="Kanon B."/>
            <person name="Kampinga H.H."/>
        </authorList>
    </citation>
    <scope>SUBCELLULAR LOCATION</scope>
</reference>
<reference key="5">
    <citation type="journal article" date="2010" name="Neurology">
        <title>Mutant small heat shock protein B3 causes motor neuropathy: utility of a candidate gene approach.</title>
        <authorList>
            <person name="Kolb S.J."/>
            <person name="Snyder P.J."/>
            <person name="Poi E.J."/>
            <person name="Renard E.A."/>
            <person name="Bartlett A."/>
            <person name="Gu S."/>
            <person name="Sutton S."/>
            <person name="Arnold W.D."/>
            <person name="Freimer M.L."/>
            <person name="Lawson V.H."/>
            <person name="Kissel J.T."/>
            <person name="Prior T.W."/>
        </authorList>
    </citation>
    <scope>VARIANT HMND4 SER-7</scope>
</reference>
<keyword id="KW-0002">3D-structure</keyword>
<keyword id="KW-0963">Cytoplasm</keyword>
<keyword id="KW-0225">Disease variant</keyword>
<keyword id="KW-0523">Neurodegeneration</keyword>
<keyword id="KW-0622">Neuropathy</keyword>
<keyword id="KW-0539">Nucleus</keyword>
<keyword id="KW-1267">Proteomics identification</keyword>
<keyword id="KW-1185">Reference proteome</keyword>
<keyword id="KW-0346">Stress response</keyword>